<comment type="function">
    <text evidence="1">Displays ATPase and GTPase activities.</text>
</comment>
<comment type="similarity">
    <text evidence="1">Belongs to the RapZ-like family.</text>
</comment>
<accession>B1LAX2</accession>
<name>Y1124_THESQ</name>
<reference key="1">
    <citation type="journal article" date="2011" name="J. Bacteriol.">
        <title>Genome sequence of Thermotoga sp. strain RQ2, a hyperthermophilic bacterium isolated from a geothermally heated region of the seafloor near Ribeira Quente, the Azores.</title>
        <authorList>
            <person name="Swithers K.S."/>
            <person name="DiPippo J.L."/>
            <person name="Bruce D.C."/>
            <person name="Detter C."/>
            <person name="Tapia R."/>
            <person name="Han S."/>
            <person name="Saunders E."/>
            <person name="Goodwin L.A."/>
            <person name="Han J."/>
            <person name="Woyke T."/>
            <person name="Pitluck S."/>
            <person name="Pennacchio L."/>
            <person name="Nolan M."/>
            <person name="Mikhailova N."/>
            <person name="Lykidis A."/>
            <person name="Land M.L."/>
            <person name="Brettin T."/>
            <person name="Stetter K.O."/>
            <person name="Nelson K.E."/>
            <person name="Gogarten J.P."/>
            <person name="Noll K.M."/>
        </authorList>
    </citation>
    <scope>NUCLEOTIDE SEQUENCE [LARGE SCALE GENOMIC DNA]</scope>
    <source>
        <strain>RQ2</strain>
    </source>
</reference>
<organism>
    <name type="scientific">Thermotoga sp. (strain RQ2)</name>
    <dbReference type="NCBI Taxonomy" id="126740"/>
    <lineage>
        <taxon>Bacteria</taxon>
        <taxon>Thermotogati</taxon>
        <taxon>Thermotogota</taxon>
        <taxon>Thermotogae</taxon>
        <taxon>Thermotogales</taxon>
        <taxon>Thermotogaceae</taxon>
        <taxon>Thermotoga</taxon>
    </lineage>
</organism>
<feature type="chain" id="PRO_1000130794" description="Nucleotide-binding protein TRQ2_1124">
    <location>
        <begin position="1"/>
        <end position="281"/>
    </location>
</feature>
<feature type="binding site" evidence="1">
    <location>
        <begin position="9"/>
        <end position="16"/>
    </location>
    <ligand>
        <name>ATP</name>
        <dbReference type="ChEBI" id="CHEBI:30616"/>
    </ligand>
</feature>
<feature type="binding site" evidence="1">
    <location>
        <begin position="58"/>
        <end position="61"/>
    </location>
    <ligand>
        <name>GTP</name>
        <dbReference type="ChEBI" id="CHEBI:37565"/>
    </ligand>
</feature>
<protein>
    <recommendedName>
        <fullName evidence="1">Nucleotide-binding protein TRQ2_1124</fullName>
    </recommendedName>
</protein>
<sequence length="281" mass="31891">MKRIVVVSGLSGAGKTTAMGFLEDLGYFCVDNVPGNILEELLKLFMSSDLEKMAMAIDVRSEHLGDPISAVERIKEKTNTLVIFLEASTEELLRRYALTRRRHPLQKDGIGLEDAIEKERKILSRIKEIADVVIDTTSMNTHQLRETLTHFLVNQSGGTSVRIMSFGFKHGIPMDADFVFDARFLPNPHYVPELSSKTGLDSKVEAYFKNYPVVEEFIEKIYEVLKVAIEEYQRTGRRIVTVGIGCTGGKHRSVYIAHRLKEMLEKEGFTVIEKHRDIEKV</sequence>
<dbReference type="EMBL" id="CP000969">
    <property type="protein sequence ID" value="ACB09470.1"/>
    <property type="molecule type" value="Genomic_DNA"/>
</dbReference>
<dbReference type="SMR" id="B1LAX2"/>
<dbReference type="KEGG" id="trq:TRQ2_1124"/>
<dbReference type="HOGENOM" id="CLU_059558_1_1_0"/>
<dbReference type="Proteomes" id="UP000001687">
    <property type="component" value="Chromosome"/>
</dbReference>
<dbReference type="GO" id="GO:0005524">
    <property type="term" value="F:ATP binding"/>
    <property type="evidence" value="ECO:0007669"/>
    <property type="project" value="UniProtKB-UniRule"/>
</dbReference>
<dbReference type="GO" id="GO:0005525">
    <property type="term" value="F:GTP binding"/>
    <property type="evidence" value="ECO:0007669"/>
    <property type="project" value="UniProtKB-UniRule"/>
</dbReference>
<dbReference type="Gene3D" id="3.40.50.300">
    <property type="entry name" value="P-loop containing nucleotide triphosphate hydrolases"/>
    <property type="match status" value="1"/>
</dbReference>
<dbReference type="HAMAP" id="MF_00636">
    <property type="entry name" value="RapZ_like"/>
    <property type="match status" value="1"/>
</dbReference>
<dbReference type="InterPro" id="IPR027417">
    <property type="entry name" value="P-loop_NTPase"/>
</dbReference>
<dbReference type="InterPro" id="IPR005337">
    <property type="entry name" value="RapZ-like"/>
</dbReference>
<dbReference type="InterPro" id="IPR053930">
    <property type="entry name" value="RapZ-like_N"/>
</dbReference>
<dbReference type="InterPro" id="IPR053931">
    <property type="entry name" value="RapZ_C"/>
</dbReference>
<dbReference type="NCBIfam" id="NF003828">
    <property type="entry name" value="PRK05416.1"/>
    <property type="match status" value="1"/>
</dbReference>
<dbReference type="PANTHER" id="PTHR30448">
    <property type="entry name" value="RNASE ADAPTER PROTEIN RAPZ"/>
    <property type="match status" value="1"/>
</dbReference>
<dbReference type="PANTHER" id="PTHR30448:SF0">
    <property type="entry name" value="RNASE ADAPTER PROTEIN RAPZ"/>
    <property type="match status" value="1"/>
</dbReference>
<dbReference type="Pfam" id="PF22740">
    <property type="entry name" value="PapZ_C"/>
    <property type="match status" value="1"/>
</dbReference>
<dbReference type="Pfam" id="PF03668">
    <property type="entry name" value="RapZ-like_N"/>
    <property type="match status" value="1"/>
</dbReference>
<dbReference type="PIRSF" id="PIRSF005052">
    <property type="entry name" value="P-loopkin"/>
    <property type="match status" value="1"/>
</dbReference>
<dbReference type="SUPFAM" id="SSF52540">
    <property type="entry name" value="P-loop containing nucleoside triphosphate hydrolases"/>
    <property type="match status" value="1"/>
</dbReference>
<keyword id="KW-0067">ATP-binding</keyword>
<keyword id="KW-0342">GTP-binding</keyword>
<keyword id="KW-0547">Nucleotide-binding</keyword>
<evidence type="ECO:0000255" key="1">
    <source>
        <dbReference type="HAMAP-Rule" id="MF_00636"/>
    </source>
</evidence>
<proteinExistence type="inferred from homology"/>
<gene>
    <name type="ordered locus">TRQ2_1124</name>
</gene>